<organism>
    <name type="scientific">Gibberella zeae (strain ATCC MYA-4620 / CBS 123657 / FGSC 9075 / NRRL 31084 / PH-1)</name>
    <name type="common">Wheat head blight fungus</name>
    <name type="synonym">Fusarium graminearum</name>
    <dbReference type="NCBI Taxonomy" id="229533"/>
    <lineage>
        <taxon>Eukaryota</taxon>
        <taxon>Fungi</taxon>
        <taxon>Dikarya</taxon>
        <taxon>Ascomycota</taxon>
        <taxon>Pezizomycotina</taxon>
        <taxon>Sordariomycetes</taxon>
        <taxon>Hypocreomycetidae</taxon>
        <taxon>Hypocreales</taxon>
        <taxon>Nectriaceae</taxon>
        <taxon>Fusarium</taxon>
    </lineage>
</organism>
<comment type="function">
    <text evidence="1">Histone H3-H4 chaperone that plays a role in maintenance of chromatin structure during RNA polymerase II transcription elongation thereby repressing transcription initiation from cryptic promoters. Mediates the reassembly of nucleosomes onto the promoters of at least a selected set of genes during repression; the nucleosome reassembly is essential for transcriptional repression. Essential for viability.</text>
</comment>
<comment type="subcellular location">
    <subcellularLocation>
        <location evidence="1">Nucleus</location>
    </subcellularLocation>
    <subcellularLocation>
        <location evidence="1">Chromosome</location>
    </subcellularLocation>
</comment>
<comment type="similarity">
    <text evidence="4">Belongs to the SPT6 family.</text>
</comment>
<sequence>MSNSMRDLISGEAELDDEEEDESFDERGGQRRHKNAVEDSSEEEEDDDDEEEARKVREGFIVDEDEDEDEGGESDADVRPLHKRKREHRDREEEAQLDEDDLDLIGEQFGERPKPTTQSKFKRLKRGTRDEDRGNQRRGLDDIFSDEEDDAGEQRAYNNRSSYRQADEFDDFIEEDFPDDPEELEQQREDAEVARPRDRVIGNIADTANLDKDALDDMEAIFGNGEDYDWALQMEEEEEDREREEQAIELKDVFEPSQLKEKLLTDEDNEIRFTDEPERFQIDRKTFKSLQLTAEQFKEEARWITNQLWPKKGLASDLQSPFGKAVGKVLEFFIVDEVEVPYVFQHRKDYLLHTRKTRNPNRDDPDAPEYVISADKLLNQDDLWKILELDIKFRSFVDKRNALEKTVDNLKGMEIHDAMVDEMIPEATTMEELQDLQDYLHFQYGQQLKDLAALAGNLSLTKRPGSKSNLLERVRQGKAYGFVRAYGISADQLAKNALRHGKKVTPDDDAQYPMDLADSLIDDVFSTGDQVISAARQMYSEELFASPRMRKHFRNSYYQAAEISCRRTEKGLRRIDDSHPYYEIKYLQNQAIADLVHQPELFLKMMKAEEEGLVTIKLDMPARYDFRQHLYQEFESENFSDRAEQWREERKKVLDLAYPKLEKIIAKNVKEVIRTFCQDEVLKMCREEYAKRLDQAPYKPKGMILGTTPRVLVLSNGMSDPARDPICWAWVEEDGRVIEQGKLGNLARDERQREEFEELVKRRRPDVIGVSGWSAETTKLVRDLEGLVNEKGLMGPEFEDPDTNDYRTEPLEVVVVNDEVARLYKDSPRALAEHPSLNPITRYCVALARYMQNPMKEYAALGKDVSSLSYHPCQNLLPADKLAKYLDSAMVDMVNLCGVDINEAMNDTYTANLLPYVSGLGPRKATSVIKAINANGGAVGTRDELVGDPDSGKLPVVGPRVWNNCASFLFIEYEATNPSSDPLDNTRVHPEDYELGRKMAADALELDEEDVKGETDENGPGAIVRKLFKMDEQDKVNELVLEEYAEQLERNYSQRKRATLETIRAELQAPYEELRRNFALLSASEIFTMFTGETKHTLCEGMIVPVNVRVVKDDFAIVKLDCGIEGRVEGHEVSHRSSIKEVLSSGQTSQAKILDINYKDFMAKLSMREDALRIPYKRPINLGRDGWDYVLEAADKEELREKDKTTGRTQRVVKHPNFKPFNGLQAEEYLGSQPNGEVVIRPSSKGNDHLAVTWKVADGVFQHIDVLEMQKETEFAVGKLLRVGGKYTYTDLDELIVEHVKAMARKVEELMRHDKYQNRSRGETEKWLTTYIDANPNRSTYAFCIDTKHPGYFWLCFKASRAAKVIALPVRAIPQGFELKGYQYPDMRALCNGFKLRYQNEFSKMGQR</sequence>
<feature type="chain" id="PRO_0000238576" description="Transcription elongation factor SPT6">
    <location>
        <begin position="1"/>
        <end position="1408"/>
    </location>
</feature>
<feature type="domain" description="S1 motif" evidence="2">
    <location>
        <begin position="1101"/>
        <end position="1168"/>
    </location>
</feature>
<feature type="domain" description="SH2">
    <location>
        <begin position="1213"/>
        <end position="1314"/>
    </location>
</feature>
<feature type="region of interest" description="Disordered" evidence="3">
    <location>
        <begin position="1"/>
        <end position="199"/>
    </location>
</feature>
<feature type="compositionally biased region" description="Acidic residues" evidence="3">
    <location>
        <begin position="13"/>
        <end position="24"/>
    </location>
</feature>
<feature type="compositionally biased region" description="Acidic residues" evidence="3">
    <location>
        <begin position="39"/>
        <end position="51"/>
    </location>
</feature>
<feature type="compositionally biased region" description="Acidic residues" evidence="3">
    <location>
        <begin position="61"/>
        <end position="75"/>
    </location>
</feature>
<feature type="compositionally biased region" description="Acidic residues" evidence="3">
    <location>
        <begin position="95"/>
        <end position="104"/>
    </location>
</feature>
<feature type="compositionally biased region" description="Basic and acidic residues" evidence="3">
    <location>
        <begin position="127"/>
        <end position="141"/>
    </location>
</feature>
<feature type="compositionally biased region" description="Acidic residues" evidence="3">
    <location>
        <begin position="168"/>
        <end position="184"/>
    </location>
</feature>
<feature type="compositionally biased region" description="Basic and acidic residues" evidence="3">
    <location>
        <begin position="185"/>
        <end position="199"/>
    </location>
</feature>
<evidence type="ECO:0000250" key="1">
    <source>
        <dbReference type="UniProtKB" id="P23615"/>
    </source>
</evidence>
<evidence type="ECO:0000255" key="2">
    <source>
        <dbReference type="PROSITE-ProRule" id="PRU00180"/>
    </source>
</evidence>
<evidence type="ECO:0000256" key="3">
    <source>
        <dbReference type="SAM" id="MobiDB-lite"/>
    </source>
</evidence>
<evidence type="ECO:0000305" key="4"/>
<accession>Q4HYQ4</accession>
<accession>A0A0E0RVD1</accession>
<accession>V6RPP5</accession>
<proteinExistence type="inferred from homology"/>
<reference key="1">
    <citation type="journal article" date="2007" name="Science">
        <title>The Fusarium graminearum genome reveals a link between localized polymorphism and pathogen specialization.</title>
        <authorList>
            <person name="Cuomo C.A."/>
            <person name="Gueldener U."/>
            <person name="Xu J.-R."/>
            <person name="Trail F."/>
            <person name="Turgeon B.G."/>
            <person name="Di Pietro A."/>
            <person name="Walton J.D."/>
            <person name="Ma L.-J."/>
            <person name="Baker S.E."/>
            <person name="Rep M."/>
            <person name="Adam G."/>
            <person name="Antoniw J."/>
            <person name="Baldwin T."/>
            <person name="Calvo S.E."/>
            <person name="Chang Y.-L."/>
            <person name="DeCaprio D."/>
            <person name="Gale L.R."/>
            <person name="Gnerre S."/>
            <person name="Goswami R.S."/>
            <person name="Hammond-Kosack K."/>
            <person name="Harris L.J."/>
            <person name="Hilburn K."/>
            <person name="Kennell J.C."/>
            <person name="Kroken S."/>
            <person name="Magnuson J.K."/>
            <person name="Mannhaupt G."/>
            <person name="Mauceli E.W."/>
            <person name="Mewes H.-W."/>
            <person name="Mitterbauer R."/>
            <person name="Muehlbauer G."/>
            <person name="Muensterkoetter M."/>
            <person name="Nelson D."/>
            <person name="O'Donnell K."/>
            <person name="Ouellet T."/>
            <person name="Qi W."/>
            <person name="Quesneville H."/>
            <person name="Roncero M.I.G."/>
            <person name="Seong K.-Y."/>
            <person name="Tetko I.V."/>
            <person name="Urban M."/>
            <person name="Waalwijk C."/>
            <person name="Ward T.J."/>
            <person name="Yao J."/>
            <person name="Birren B.W."/>
            <person name="Kistler H.C."/>
        </authorList>
    </citation>
    <scope>NUCLEOTIDE SEQUENCE [LARGE SCALE GENOMIC DNA]</scope>
    <source>
        <strain>ATCC MYA-4620 / CBS 123657 / FGSC 9075 / NRRL 31084 / PH-1</strain>
    </source>
</reference>
<reference key="2">
    <citation type="journal article" date="2010" name="Nature">
        <title>Comparative genomics reveals mobile pathogenicity chromosomes in Fusarium.</title>
        <authorList>
            <person name="Ma L.-J."/>
            <person name="van der Does H.C."/>
            <person name="Borkovich K.A."/>
            <person name="Coleman J.J."/>
            <person name="Daboussi M.-J."/>
            <person name="Di Pietro A."/>
            <person name="Dufresne M."/>
            <person name="Freitag M."/>
            <person name="Grabherr M."/>
            <person name="Henrissat B."/>
            <person name="Houterman P.M."/>
            <person name="Kang S."/>
            <person name="Shim W.-B."/>
            <person name="Woloshuk C."/>
            <person name="Xie X."/>
            <person name="Xu J.-R."/>
            <person name="Antoniw J."/>
            <person name="Baker S.E."/>
            <person name="Bluhm B.H."/>
            <person name="Breakspear A."/>
            <person name="Brown D.W."/>
            <person name="Butchko R.A.E."/>
            <person name="Chapman S."/>
            <person name="Coulson R."/>
            <person name="Coutinho P.M."/>
            <person name="Danchin E.G.J."/>
            <person name="Diener A."/>
            <person name="Gale L.R."/>
            <person name="Gardiner D.M."/>
            <person name="Goff S."/>
            <person name="Hammond-Kosack K.E."/>
            <person name="Hilburn K."/>
            <person name="Hua-Van A."/>
            <person name="Jonkers W."/>
            <person name="Kazan K."/>
            <person name="Kodira C.D."/>
            <person name="Koehrsen M."/>
            <person name="Kumar L."/>
            <person name="Lee Y.-H."/>
            <person name="Li L."/>
            <person name="Manners J.M."/>
            <person name="Miranda-Saavedra D."/>
            <person name="Mukherjee M."/>
            <person name="Park G."/>
            <person name="Park J."/>
            <person name="Park S.-Y."/>
            <person name="Proctor R.H."/>
            <person name="Regev A."/>
            <person name="Ruiz-Roldan M.C."/>
            <person name="Sain D."/>
            <person name="Sakthikumar S."/>
            <person name="Sykes S."/>
            <person name="Schwartz D.C."/>
            <person name="Turgeon B.G."/>
            <person name="Wapinski I."/>
            <person name="Yoder O."/>
            <person name="Young S."/>
            <person name="Zeng Q."/>
            <person name="Zhou S."/>
            <person name="Galagan J."/>
            <person name="Cuomo C.A."/>
            <person name="Kistler H.C."/>
            <person name="Rep M."/>
        </authorList>
    </citation>
    <scope>GENOME REANNOTATION</scope>
    <source>
        <strain>ATCC MYA-4620 / CBS 123657 / FGSC 9075 / NRRL 31084 / PH-1</strain>
    </source>
</reference>
<reference key="3">
    <citation type="journal article" date="2015" name="BMC Genomics">
        <title>The completed genome sequence of the pathogenic ascomycete fungus Fusarium graminearum.</title>
        <authorList>
            <person name="King R."/>
            <person name="Urban M."/>
            <person name="Hammond-Kosack M.C.U."/>
            <person name="Hassani-Pak K."/>
            <person name="Hammond-Kosack K.E."/>
        </authorList>
    </citation>
    <scope>NUCLEOTIDE SEQUENCE [LARGE SCALE GENOMIC DNA]</scope>
    <source>
        <strain>ATCC MYA-4620 / CBS 123657 / FGSC 9075 / NRRL 31084 / PH-1</strain>
    </source>
</reference>
<gene>
    <name type="primary">SPT6</name>
    <name type="ORF">FGRRES_09904</name>
    <name type="ORF">FGSG_09904</name>
</gene>
<protein>
    <recommendedName>
        <fullName>Transcription elongation factor SPT6</fullName>
    </recommendedName>
    <alternativeName>
        <fullName>Chromatin elongation factor SPT6</fullName>
    </alternativeName>
</protein>
<name>SPT6_GIBZE</name>
<keyword id="KW-0158">Chromosome</keyword>
<keyword id="KW-0539">Nucleus</keyword>
<keyword id="KW-1185">Reference proteome</keyword>
<keyword id="KW-0727">SH2 domain</keyword>
<keyword id="KW-0804">Transcription</keyword>
<dbReference type="EMBL" id="DS231669">
    <property type="protein sequence ID" value="ESU16548.1"/>
    <property type="molecule type" value="Genomic_DNA"/>
</dbReference>
<dbReference type="EMBL" id="HG970332">
    <property type="protein sequence ID" value="CEF75206.1"/>
    <property type="molecule type" value="Genomic_DNA"/>
</dbReference>
<dbReference type="RefSeq" id="XP_011318810.1">
    <property type="nucleotide sequence ID" value="XM_011320508.1"/>
</dbReference>
<dbReference type="SMR" id="Q4HYQ4"/>
<dbReference type="FunCoup" id="Q4HYQ4">
    <property type="interactions" value="1222"/>
</dbReference>
<dbReference type="STRING" id="229533.Q4HYQ4"/>
<dbReference type="GeneID" id="23556830"/>
<dbReference type="KEGG" id="fgr:FGSG_09904"/>
<dbReference type="VEuPathDB" id="FungiDB:FGRAMPH1_01G06803"/>
<dbReference type="eggNOG" id="KOG1856">
    <property type="taxonomic scope" value="Eukaryota"/>
</dbReference>
<dbReference type="HOGENOM" id="CLU_001680_0_1_1"/>
<dbReference type="InParanoid" id="Q4HYQ4"/>
<dbReference type="OrthoDB" id="71310at110618"/>
<dbReference type="PHI-base" id="PHI:1601"/>
<dbReference type="Proteomes" id="UP000070720">
    <property type="component" value="Chromosome 1"/>
</dbReference>
<dbReference type="GO" id="GO:0008023">
    <property type="term" value="C:transcription elongation factor complex"/>
    <property type="evidence" value="ECO:0007669"/>
    <property type="project" value="TreeGrafter"/>
</dbReference>
<dbReference type="GO" id="GO:0003677">
    <property type="term" value="F:DNA binding"/>
    <property type="evidence" value="ECO:0007669"/>
    <property type="project" value="InterPro"/>
</dbReference>
<dbReference type="GO" id="GO:0042393">
    <property type="term" value="F:histone binding"/>
    <property type="evidence" value="ECO:0007669"/>
    <property type="project" value="TreeGrafter"/>
</dbReference>
<dbReference type="GO" id="GO:0031491">
    <property type="term" value="F:nucleosome binding"/>
    <property type="evidence" value="ECO:0007669"/>
    <property type="project" value="TreeGrafter"/>
</dbReference>
<dbReference type="GO" id="GO:0034728">
    <property type="term" value="P:nucleosome organization"/>
    <property type="evidence" value="ECO:0007669"/>
    <property type="project" value="TreeGrafter"/>
</dbReference>
<dbReference type="GO" id="GO:0140673">
    <property type="term" value="P:transcription elongation-coupled chromatin remodeling"/>
    <property type="evidence" value="ECO:0007669"/>
    <property type="project" value="InterPro"/>
</dbReference>
<dbReference type="CDD" id="cd00164">
    <property type="entry name" value="S1_like"/>
    <property type="match status" value="1"/>
</dbReference>
<dbReference type="CDD" id="cd09928">
    <property type="entry name" value="SH2_Cterm_SPT6_like"/>
    <property type="match status" value="1"/>
</dbReference>
<dbReference type="CDD" id="cd09918">
    <property type="entry name" value="SH2_Nterm_SPT6_like"/>
    <property type="match status" value="1"/>
</dbReference>
<dbReference type="FunFam" id="3.30.420.140:FF:000007">
    <property type="entry name" value="Transcription elongation factor SPT6"/>
    <property type="match status" value="1"/>
</dbReference>
<dbReference type="FunFam" id="3.30.505.10:FF:000065">
    <property type="entry name" value="Transcription elongation factor SPT6"/>
    <property type="match status" value="1"/>
</dbReference>
<dbReference type="FunFam" id="1.10.10.2740:FF:000002">
    <property type="entry name" value="Transcription elongation factor Spt6"/>
    <property type="match status" value="1"/>
</dbReference>
<dbReference type="FunFam" id="1.10.10.650:FF:000004">
    <property type="entry name" value="Transcription elongation factor Spt6"/>
    <property type="match status" value="1"/>
</dbReference>
<dbReference type="FunFam" id="3.30.505.10:FF:000056">
    <property type="entry name" value="Transcription elongation factor Spt6"/>
    <property type="match status" value="1"/>
</dbReference>
<dbReference type="FunFam" id="1.10.150.850:FF:000001">
    <property type="entry name" value="Transcription elongation factor spt6"/>
    <property type="match status" value="1"/>
</dbReference>
<dbReference type="Gene3D" id="2.40.50.140">
    <property type="entry name" value="Nucleic acid-binding proteins"/>
    <property type="match status" value="1"/>
</dbReference>
<dbReference type="Gene3D" id="1.10.10.650">
    <property type="entry name" value="RuvA domain 2-like"/>
    <property type="match status" value="1"/>
</dbReference>
<dbReference type="Gene3D" id="3.30.505.10">
    <property type="entry name" value="SH2 domain"/>
    <property type="match status" value="2"/>
</dbReference>
<dbReference type="Gene3D" id="1.10.10.2740">
    <property type="entry name" value="Spt6, Death-like domain"/>
    <property type="match status" value="1"/>
</dbReference>
<dbReference type="Gene3D" id="1.10.150.850">
    <property type="entry name" value="Spt6, helix-hairpin-helix domain"/>
    <property type="match status" value="1"/>
</dbReference>
<dbReference type="Gene3D" id="1.10.3500.10">
    <property type="entry name" value="Tex N-terminal region-like"/>
    <property type="match status" value="1"/>
</dbReference>
<dbReference type="Gene3D" id="3.30.420.140">
    <property type="entry name" value="YqgF/RNase H-like domain"/>
    <property type="match status" value="1"/>
</dbReference>
<dbReference type="InterPro" id="IPR041692">
    <property type="entry name" value="HHH_9"/>
</dbReference>
<dbReference type="InterPro" id="IPR012340">
    <property type="entry name" value="NA-bd_OB-fold"/>
</dbReference>
<dbReference type="InterPro" id="IPR012337">
    <property type="entry name" value="RNaseH-like_sf"/>
</dbReference>
<dbReference type="InterPro" id="IPR010994">
    <property type="entry name" value="RuvA_2-like"/>
</dbReference>
<dbReference type="InterPro" id="IPR003029">
    <property type="entry name" value="S1_domain"/>
</dbReference>
<dbReference type="InterPro" id="IPR000980">
    <property type="entry name" value="SH2"/>
</dbReference>
<dbReference type="InterPro" id="IPR036860">
    <property type="entry name" value="SH2_dom_sf"/>
</dbReference>
<dbReference type="InterPro" id="IPR049540">
    <property type="entry name" value="Spt6-like_S1"/>
</dbReference>
<dbReference type="InterPro" id="IPR028083">
    <property type="entry name" value="Spt6_acidic_N_dom"/>
</dbReference>
<dbReference type="InterPro" id="IPR042066">
    <property type="entry name" value="Spt6_death-like"/>
</dbReference>
<dbReference type="InterPro" id="IPR032706">
    <property type="entry name" value="Spt6_HHH"/>
</dbReference>
<dbReference type="InterPro" id="IPR028088">
    <property type="entry name" value="Spt6_HTH_DNA-bd_dom"/>
</dbReference>
<dbReference type="InterPro" id="IPR035420">
    <property type="entry name" value="Spt6_SH2"/>
</dbReference>
<dbReference type="InterPro" id="IPR035018">
    <property type="entry name" value="Spt6_SH2_C"/>
</dbReference>
<dbReference type="InterPro" id="IPR035019">
    <property type="entry name" value="Spt6_SH2_N"/>
</dbReference>
<dbReference type="InterPro" id="IPR028231">
    <property type="entry name" value="Spt6_YqgF"/>
</dbReference>
<dbReference type="InterPro" id="IPR055179">
    <property type="entry name" value="Tex-like_central_region"/>
</dbReference>
<dbReference type="InterPro" id="IPR023323">
    <property type="entry name" value="Tex-like_dom_sf"/>
</dbReference>
<dbReference type="InterPro" id="IPR023319">
    <property type="entry name" value="Tex-like_HTH_dom_sf"/>
</dbReference>
<dbReference type="InterPro" id="IPR017072">
    <property type="entry name" value="TF_Spt6"/>
</dbReference>
<dbReference type="InterPro" id="IPR037027">
    <property type="entry name" value="YqgF/RNaseH-like_dom_sf"/>
</dbReference>
<dbReference type="PANTHER" id="PTHR10145">
    <property type="entry name" value="TRANSCRIPTION ELONGATION FACTOR SPT6"/>
    <property type="match status" value="1"/>
</dbReference>
<dbReference type="PANTHER" id="PTHR10145:SF6">
    <property type="entry name" value="TRANSCRIPTION ELONGATION FACTOR SPT6"/>
    <property type="match status" value="1"/>
</dbReference>
<dbReference type="Pfam" id="PF14635">
    <property type="entry name" value="HHH_7"/>
    <property type="match status" value="1"/>
</dbReference>
<dbReference type="Pfam" id="PF17674">
    <property type="entry name" value="HHH_9"/>
    <property type="match status" value="1"/>
</dbReference>
<dbReference type="Pfam" id="PF14641">
    <property type="entry name" value="HTH_44"/>
    <property type="match status" value="1"/>
</dbReference>
<dbReference type="Pfam" id="PF14633">
    <property type="entry name" value="SH2_2"/>
    <property type="match status" value="1"/>
</dbReference>
<dbReference type="Pfam" id="PF14632">
    <property type="entry name" value="SPT6_acidic"/>
    <property type="match status" value="1"/>
</dbReference>
<dbReference type="Pfam" id="PF21710">
    <property type="entry name" value="Spt6_S1"/>
    <property type="match status" value="1"/>
</dbReference>
<dbReference type="Pfam" id="PF22706">
    <property type="entry name" value="Tex_central_region"/>
    <property type="match status" value="1"/>
</dbReference>
<dbReference type="Pfam" id="PF14639">
    <property type="entry name" value="YqgF"/>
    <property type="match status" value="1"/>
</dbReference>
<dbReference type="PIRSF" id="PIRSF036947">
    <property type="entry name" value="Spt6"/>
    <property type="match status" value="1"/>
</dbReference>
<dbReference type="SMART" id="SM00252">
    <property type="entry name" value="SH2"/>
    <property type="match status" value="1"/>
</dbReference>
<dbReference type="SUPFAM" id="SSF50249">
    <property type="entry name" value="Nucleic acid-binding proteins"/>
    <property type="match status" value="1"/>
</dbReference>
<dbReference type="SUPFAM" id="SSF53098">
    <property type="entry name" value="Ribonuclease H-like"/>
    <property type="match status" value="1"/>
</dbReference>
<dbReference type="SUPFAM" id="SSF47781">
    <property type="entry name" value="RuvA domain 2-like"/>
    <property type="match status" value="2"/>
</dbReference>
<dbReference type="SUPFAM" id="SSF55550">
    <property type="entry name" value="SH2 domain"/>
    <property type="match status" value="1"/>
</dbReference>
<dbReference type="SUPFAM" id="SSF158832">
    <property type="entry name" value="Tex N-terminal region-like"/>
    <property type="match status" value="1"/>
</dbReference>
<dbReference type="PROSITE" id="PS50126">
    <property type="entry name" value="S1"/>
    <property type="match status" value="1"/>
</dbReference>